<feature type="chain" id="PRO_0000198695" description="Myosin light chain 6B">
    <location>
        <begin position="1"/>
        <end position="208"/>
    </location>
</feature>
<feature type="domain" description="EF-hand 1" evidence="1">
    <location>
        <begin position="64"/>
        <end position="99"/>
    </location>
</feature>
<feature type="domain" description="EF-hand 2" evidence="1">
    <location>
        <begin position="141"/>
        <end position="176"/>
    </location>
</feature>
<feature type="domain" description="EF-hand 3" evidence="1">
    <location>
        <begin position="176"/>
        <end position="208"/>
    </location>
</feature>
<feature type="region of interest" description="Disordered" evidence="2">
    <location>
        <begin position="1"/>
        <end position="51"/>
    </location>
</feature>
<feature type="compositionally biased region" description="Low complexity" evidence="2">
    <location>
        <begin position="10"/>
        <end position="40"/>
    </location>
</feature>
<feature type="helix" evidence="4">
    <location>
        <begin position="69"/>
        <end position="76"/>
    </location>
</feature>
<feature type="strand" evidence="4">
    <location>
        <begin position="79"/>
        <end position="86"/>
    </location>
</feature>
<feature type="helix" evidence="4">
    <location>
        <begin position="89"/>
        <end position="95"/>
    </location>
</feature>
<feature type="helix" evidence="4">
    <location>
        <begin position="102"/>
        <end position="108"/>
    </location>
</feature>
<feature type="helix" evidence="4">
    <location>
        <begin position="114"/>
        <end position="117"/>
    </location>
</feature>
<feature type="strand" evidence="4">
    <location>
        <begin position="121"/>
        <end position="123"/>
    </location>
</feature>
<feature type="helix" evidence="4">
    <location>
        <begin position="124"/>
        <end position="134"/>
    </location>
</feature>
<feature type="helix" evidence="4">
    <location>
        <begin position="147"/>
        <end position="151"/>
    </location>
</feature>
<feature type="strand" evidence="4">
    <location>
        <begin position="157"/>
        <end position="162"/>
    </location>
</feature>
<feature type="helix" evidence="4">
    <location>
        <begin position="163"/>
        <end position="172"/>
    </location>
</feature>
<feature type="strand" evidence="4">
    <location>
        <begin position="173"/>
        <end position="175"/>
    </location>
</feature>
<feature type="helix" evidence="4">
    <location>
        <begin position="179"/>
        <end position="186"/>
    </location>
</feature>
<feature type="turn" evidence="3">
    <location>
        <begin position="187"/>
        <end position="189"/>
    </location>
</feature>
<feature type="strand" evidence="4">
    <location>
        <begin position="194"/>
        <end position="197"/>
    </location>
</feature>
<feature type="helix" evidence="4">
    <location>
        <begin position="198"/>
        <end position="204"/>
    </location>
</feature>
<name>MYL6B_HUMAN</name>
<accession>P14649</accession>
<protein>
    <recommendedName>
        <fullName>Myosin light chain 6B</fullName>
    </recommendedName>
    <alternativeName>
        <fullName>Myosin light chain 1 slow-twitch muscle A isoform</fullName>
        <shortName>MLC1sa</shortName>
    </alternativeName>
    <alternativeName>
        <fullName>Smooth muscle and nonmuscle myosin light chain alkali 6B</fullName>
    </alternativeName>
</protein>
<sequence>MPPKKDVPVKKPAGPSISKPAAKPAAAGAPPAKTKAEPAVPQAPQKTQEPPVDLSKVVIEFNKDQLEEFKEAFELFDRVGDGKILYSQCGDVMRALGQNPTNAEVLKVLGNPKSDELKSRRVDFETFLPMLQAVAKNRGQGTYEDYLEGFRVFDKEGNGKVMGAELRHVLTTLGEKMTEEEVETVLAGHEDSNGCINYEAFLKHILSV</sequence>
<comment type="function">
    <text>Regulatory light chain of myosin. Does not bind calcium.</text>
</comment>
<comment type="subunit">
    <text>Myosin is a hexamer of 2 heavy chains and 4 light chains.</text>
</comment>
<comment type="interaction">
    <interactant intactId="EBI-358570">
        <id>P14649</id>
    </interactant>
    <interactant intactId="EBI-1377865">
        <id>Q15506</id>
        <label>SPA17</label>
    </interactant>
    <organismsDiffer>false</organismsDiffer>
    <experiments>14</experiments>
</comment>
<comment type="interaction">
    <interactant intactId="EBI-358570">
        <id>P14649</id>
    </interactant>
    <interactant intactId="EBI-1040586">
        <id>Q02440</id>
        <label>MYO5A</label>
    </interactant>
    <organismsDiffer>true</organismsDiffer>
    <experiments>2</experiments>
</comment>
<keyword id="KW-0002">3D-structure</keyword>
<keyword id="KW-0505">Motor protein</keyword>
<keyword id="KW-0514">Muscle protein</keyword>
<keyword id="KW-0518">Myosin</keyword>
<keyword id="KW-1267">Proteomics identification</keyword>
<keyword id="KW-1185">Reference proteome</keyword>
<keyword id="KW-0677">Repeat</keyword>
<organism>
    <name type="scientific">Homo sapiens</name>
    <name type="common">Human</name>
    <dbReference type="NCBI Taxonomy" id="9606"/>
    <lineage>
        <taxon>Eukaryota</taxon>
        <taxon>Metazoa</taxon>
        <taxon>Chordata</taxon>
        <taxon>Craniata</taxon>
        <taxon>Vertebrata</taxon>
        <taxon>Euteleostomi</taxon>
        <taxon>Mammalia</taxon>
        <taxon>Eutheria</taxon>
        <taxon>Euarchontoglires</taxon>
        <taxon>Primates</taxon>
        <taxon>Haplorrhini</taxon>
        <taxon>Catarrhini</taxon>
        <taxon>Hominidae</taxon>
        <taxon>Homo</taxon>
    </lineage>
</organism>
<gene>
    <name type="primary">MYL6B</name>
    <name type="synonym">MLC1SA</name>
</gene>
<dbReference type="EMBL" id="X16434">
    <property type="protein sequence ID" value="CAA34457.1"/>
    <property type="molecule type" value="mRNA"/>
</dbReference>
<dbReference type="EMBL" id="M31211">
    <property type="protein sequence ID" value="AAA36320.1"/>
    <property type="molecule type" value="mRNA"/>
</dbReference>
<dbReference type="EMBL" id="BC012425">
    <property type="protein sequence ID" value="AAH12425.1"/>
    <property type="molecule type" value="mRNA"/>
</dbReference>
<dbReference type="EMBL" id="BC014400">
    <property type="protein sequence ID" value="AAH14400.1"/>
    <property type="molecule type" value="mRNA"/>
</dbReference>
<dbReference type="CCDS" id="CCDS8905.1"/>
<dbReference type="PIR" id="A34757">
    <property type="entry name" value="MOHUSA"/>
</dbReference>
<dbReference type="RefSeq" id="NP_001186558.1">
    <property type="nucleotide sequence ID" value="NM_001199629.2"/>
</dbReference>
<dbReference type="RefSeq" id="NP_002466.1">
    <property type="nucleotide sequence ID" value="NM_002475.5"/>
</dbReference>
<dbReference type="PDB" id="1OE9">
    <property type="method" value="X-ray"/>
    <property type="resolution" value="2.05 A"/>
    <property type="chains" value="B=59-208"/>
</dbReference>
<dbReference type="PDB" id="1W7I">
    <property type="method" value="X-ray"/>
    <property type="resolution" value="3.00 A"/>
    <property type="chains" value="B=59-208"/>
</dbReference>
<dbReference type="PDB" id="1W7J">
    <property type="method" value="X-ray"/>
    <property type="resolution" value="2.00 A"/>
    <property type="chains" value="B=59-208"/>
</dbReference>
<dbReference type="PDB" id="7PLT">
    <property type="method" value="EM"/>
    <property type="resolution" value="3.30 A"/>
    <property type="chains" value="B=58-208"/>
</dbReference>
<dbReference type="PDB" id="7PLU">
    <property type="method" value="EM"/>
    <property type="resolution" value="3.20 A"/>
    <property type="chains" value="B/E=58-208"/>
</dbReference>
<dbReference type="PDB" id="7PLV">
    <property type="method" value="EM"/>
    <property type="resolution" value="3.50 A"/>
    <property type="chains" value="B=58-208"/>
</dbReference>
<dbReference type="PDB" id="7PLW">
    <property type="method" value="EM"/>
    <property type="resolution" value="3.50 A"/>
    <property type="chains" value="B=58-208"/>
</dbReference>
<dbReference type="PDB" id="7PLX">
    <property type="method" value="EM"/>
    <property type="resolution" value="3.60 A"/>
    <property type="chains" value="B=58-208"/>
</dbReference>
<dbReference type="PDB" id="7PLY">
    <property type="method" value="EM"/>
    <property type="resolution" value="3.20 A"/>
    <property type="chains" value="B=58-208"/>
</dbReference>
<dbReference type="PDB" id="7PLZ">
    <property type="method" value="EM"/>
    <property type="resolution" value="3.20 A"/>
    <property type="chains" value="B/E=58-208"/>
</dbReference>
<dbReference type="PDB" id="7PM0">
    <property type="method" value="EM"/>
    <property type="resolution" value="3.60 A"/>
    <property type="chains" value="B=58-208"/>
</dbReference>
<dbReference type="PDB" id="7PM1">
    <property type="method" value="EM"/>
    <property type="resolution" value="3.50 A"/>
    <property type="chains" value="B=58-208"/>
</dbReference>
<dbReference type="PDB" id="7PM2">
    <property type="method" value="EM"/>
    <property type="resolution" value="3.60 A"/>
    <property type="chains" value="B=58-208"/>
</dbReference>
<dbReference type="PDB" id="7PM5">
    <property type="method" value="EM"/>
    <property type="resolution" value="3.10 A"/>
    <property type="chains" value="B=58-208"/>
</dbReference>
<dbReference type="PDB" id="7PM6">
    <property type="method" value="EM"/>
    <property type="resolution" value="3.00 A"/>
    <property type="chains" value="B/E=58-208"/>
</dbReference>
<dbReference type="PDB" id="7PM7">
    <property type="method" value="EM"/>
    <property type="resolution" value="3.50 A"/>
    <property type="chains" value="B=58-208"/>
</dbReference>
<dbReference type="PDB" id="7PM8">
    <property type="method" value="EM"/>
    <property type="resolution" value="3.50 A"/>
    <property type="chains" value="B=58-208"/>
</dbReference>
<dbReference type="PDB" id="7PM9">
    <property type="method" value="EM"/>
    <property type="resolution" value="3.70 A"/>
    <property type="chains" value="B=58-208"/>
</dbReference>
<dbReference type="PDB" id="7PMA">
    <property type="method" value="EM"/>
    <property type="resolution" value="3.60 A"/>
    <property type="chains" value="B=58-208"/>
</dbReference>
<dbReference type="PDB" id="7PMB">
    <property type="method" value="EM"/>
    <property type="resolution" value="3.60 A"/>
    <property type="chains" value="B=58-208"/>
</dbReference>
<dbReference type="PDB" id="7PMC">
    <property type="method" value="EM"/>
    <property type="resolution" value="3.70 A"/>
    <property type="chains" value="B=58-208"/>
</dbReference>
<dbReference type="PDB" id="7PMD">
    <property type="method" value="EM"/>
    <property type="resolution" value="2.90 A"/>
    <property type="chains" value="B=58-208"/>
</dbReference>
<dbReference type="PDB" id="7PME">
    <property type="method" value="EM"/>
    <property type="resolution" value="2.90 A"/>
    <property type="chains" value="B/E=58-208"/>
</dbReference>
<dbReference type="PDB" id="7PMF">
    <property type="method" value="EM"/>
    <property type="resolution" value="3.40 A"/>
    <property type="chains" value="B=58-208"/>
</dbReference>
<dbReference type="PDB" id="7PMG">
    <property type="method" value="EM"/>
    <property type="resolution" value="3.30 A"/>
    <property type="chains" value="B=58-208"/>
</dbReference>
<dbReference type="PDB" id="7PMH">
    <property type="method" value="EM"/>
    <property type="resolution" value="3.40 A"/>
    <property type="chains" value="B=58-208"/>
</dbReference>
<dbReference type="PDB" id="7PMI">
    <property type="method" value="EM"/>
    <property type="resolution" value="3.30 A"/>
    <property type="chains" value="B=58-208"/>
</dbReference>
<dbReference type="PDB" id="7PMJ">
    <property type="method" value="EM"/>
    <property type="resolution" value="3.40 A"/>
    <property type="chains" value="B=58-208"/>
</dbReference>
<dbReference type="PDB" id="7PML">
    <property type="method" value="EM"/>
    <property type="resolution" value="3.30 A"/>
    <property type="chains" value="B=58-208"/>
</dbReference>
<dbReference type="PDBsum" id="1OE9"/>
<dbReference type="PDBsum" id="1W7I"/>
<dbReference type="PDBsum" id="1W7J"/>
<dbReference type="PDBsum" id="7PLT"/>
<dbReference type="PDBsum" id="7PLU"/>
<dbReference type="PDBsum" id="7PLV"/>
<dbReference type="PDBsum" id="7PLW"/>
<dbReference type="PDBsum" id="7PLX"/>
<dbReference type="PDBsum" id="7PLY"/>
<dbReference type="PDBsum" id="7PLZ"/>
<dbReference type="PDBsum" id="7PM0"/>
<dbReference type="PDBsum" id="7PM1"/>
<dbReference type="PDBsum" id="7PM2"/>
<dbReference type="PDBsum" id="7PM5"/>
<dbReference type="PDBsum" id="7PM6"/>
<dbReference type="PDBsum" id="7PM7"/>
<dbReference type="PDBsum" id="7PM8"/>
<dbReference type="PDBsum" id="7PM9"/>
<dbReference type="PDBsum" id="7PMA"/>
<dbReference type="PDBsum" id="7PMB"/>
<dbReference type="PDBsum" id="7PMC"/>
<dbReference type="PDBsum" id="7PMD"/>
<dbReference type="PDBsum" id="7PME"/>
<dbReference type="PDBsum" id="7PMF"/>
<dbReference type="PDBsum" id="7PMG"/>
<dbReference type="PDBsum" id="7PMH"/>
<dbReference type="PDBsum" id="7PMI"/>
<dbReference type="PDBsum" id="7PMJ"/>
<dbReference type="PDBsum" id="7PML"/>
<dbReference type="EMDB" id="EMD-13501"/>
<dbReference type="EMDB" id="EMD-13502"/>
<dbReference type="EMDB" id="EMD-13503"/>
<dbReference type="EMDB" id="EMD-13504"/>
<dbReference type="EMDB" id="EMD-13505"/>
<dbReference type="EMDB" id="EMD-13506"/>
<dbReference type="EMDB" id="EMD-13507"/>
<dbReference type="EMDB" id="EMD-13508"/>
<dbReference type="EMDB" id="EMD-13509"/>
<dbReference type="EMDB" id="EMD-13510"/>
<dbReference type="EMDB" id="EMD-13521"/>
<dbReference type="EMDB" id="EMD-13522"/>
<dbReference type="EMDB" id="EMD-13523"/>
<dbReference type="EMDB" id="EMD-13524"/>
<dbReference type="EMDB" id="EMD-13525"/>
<dbReference type="EMDB" id="EMD-13526"/>
<dbReference type="EMDB" id="EMD-13527"/>
<dbReference type="EMDB" id="EMD-13528"/>
<dbReference type="EMDB" id="EMD-13529"/>
<dbReference type="EMDB" id="EMD-13530"/>
<dbReference type="EMDB" id="EMD-13531"/>
<dbReference type="EMDB" id="EMD-13532"/>
<dbReference type="EMDB" id="EMD-13533"/>
<dbReference type="EMDB" id="EMD-13535"/>
<dbReference type="EMDB" id="EMD-13536"/>
<dbReference type="EMDB" id="EMD-13538"/>
<dbReference type="SMR" id="P14649"/>
<dbReference type="BioGRID" id="126617">
    <property type="interactions" value="122"/>
</dbReference>
<dbReference type="FunCoup" id="P14649">
    <property type="interactions" value="548"/>
</dbReference>
<dbReference type="IntAct" id="P14649">
    <property type="interactions" value="51"/>
</dbReference>
<dbReference type="MINT" id="P14649"/>
<dbReference type="STRING" id="9606.ENSP00000450385"/>
<dbReference type="DrugBank" id="DB08378">
    <property type="generic name" value="4-[4-(2,5-DIOXO-PYRROLIDIN-1-YL)-PHENYLAMINO]-4-HYDROXY-BUTYRIC ACID"/>
</dbReference>
<dbReference type="GlyGen" id="P14649">
    <property type="glycosylation" value="2 sites, 1 O-linked glycan (2 sites)"/>
</dbReference>
<dbReference type="iPTMnet" id="P14649"/>
<dbReference type="PhosphoSitePlus" id="P14649"/>
<dbReference type="SwissPalm" id="P14649"/>
<dbReference type="BioMuta" id="MYL6B"/>
<dbReference type="DMDM" id="127153"/>
<dbReference type="jPOST" id="P14649"/>
<dbReference type="MassIVE" id="P14649"/>
<dbReference type="PaxDb" id="9606-ENSP00000450385"/>
<dbReference type="PeptideAtlas" id="P14649"/>
<dbReference type="ProteomicsDB" id="53069"/>
<dbReference type="Pumba" id="P14649"/>
<dbReference type="Antibodypedia" id="27985">
    <property type="antibodies" value="192 antibodies from 26 providers"/>
</dbReference>
<dbReference type="DNASU" id="140465"/>
<dbReference type="Ensembl" id="ENST00000550443.5">
    <property type="protein sequence ID" value="ENSP00000446643.1"/>
    <property type="gene ID" value="ENSG00000196465.11"/>
</dbReference>
<dbReference type="Ensembl" id="ENST00000553066.5">
    <property type="protein sequence ID" value="ENSP00000450385.1"/>
    <property type="gene ID" value="ENSG00000196465.11"/>
</dbReference>
<dbReference type="Ensembl" id="ENST00000695999.1">
    <property type="protein sequence ID" value="ENSP00000512320.1"/>
    <property type="gene ID" value="ENSG00000196465.11"/>
</dbReference>
<dbReference type="GeneID" id="140465"/>
<dbReference type="KEGG" id="hsa:140465"/>
<dbReference type="MANE-Select" id="ENST00000695999.1">
    <property type="protein sequence ID" value="ENSP00000512320.1"/>
    <property type="RefSeq nucleotide sequence ID" value="NM_002475.5"/>
    <property type="RefSeq protein sequence ID" value="NP_002466.1"/>
</dbReference>
<dbReference type="UCSC" id="uc001sjt.4">
    <property type="organism name" value="human"/>
</dbReference>
<dbReference type="AGR" id="HGNC:29823"/>
<dbReference type="CTD" id="140465"/>
<dbReference type="DisGeNET" id="140465"/>
<dbReference type="GeneCards" id="MYL6B"/>
<dbReference type="HGNC" id="HGNC:29823">
    <property type="gene designation" value="MYL6B"/>
</dbReference>
<dbReference type="HPA" id="ENSG00000196465">
    <property type="expression patterns" value="Tissue enhanced (skeletal muscle, tongue)"/>
</dbReference>
<dbReference type="MIM" id="609930">
    <property type="type" value="gene"/>
</dbReference>
<dbReference type="neXtProt" id="NX_P14649"/>
<dbReference type="OpenTargets" id="ENSG00000196465"/>
<dbReference type="PharmGKB" id="PA144596407"/>
<dbReference type="VEuPathDB" id="HostDB:ENSG00000196465"/>
<dbReference type="eggNOG" id="KOG0030">
    <property type="taxonomic scope" value="Eukaryota"/>
</dbReference>
<dbReference type="GeneTree" id="ENSGT01030000234570"/>
<dbReference type="HOGENOM" id="CLU_061288_13_0_1"/>
<dbReference type="InParanoid" id="P14649"/>
<dbReference type="OMA" id="NRDRGTY"/>
<dbReference type="OrthoDB" id="5959761at2759"/>
<dbReference type="PAN-GO" id="P14649">
    <property type="GO annotations" value="2 GO annotations based on evolutionary models"/>
</dbReference>
<dbReference type="PhylomeDB" id="P14649"/>
<dbReference type="TreeFam" id="TF351553"/>
<dbReference type="PathwayCommons" id="P14649"/>
<dbReference type="Reactome" id="R-HSA-445355">
    <property type="pathway name" value="Smooth Muscle Contraction"/>
</dbReference>
<dbReference type="SignaLink" id="P14649"/>
<dbReference type="SIGNOR" id="P14649"/>
<dbReference type="BioGRID-ORCS" id="140465">
    <property type="hits" value="9 hits in 1159 CRISPR screens"/>
</dbReference>
<dbReference type="CD-CODE" id="FB4E32DD">
    <property type="entry name" value="Presynaptic clusters and postsynaptic densities"/>
</dbReference>
<dbReference type="ChiTaRS" id="MYL6B">
    <property type="organism name" value="human"/>
</dbReference>
<dbReference type="EvolutionaryTrace" id="P14649"/>
<dbReference type="GeneWiki" id="MYL6B"/>
<dbReference type="GenomeRNAi" id="140465"/>
<dbReference type="Pharos" id="P14649">
    <property type="development level" value="Tbio"/>
</dbReference>
<dbReference type="PRO" id="PR:P14649"/>
<dbReference type="Proteomes" id="UP000005640">
    <property type="component" value="Chromosome 12"/>
</dbReference>
<dbReference type="RNAct" id="P14649">
    <property type="molecule type" value="protein"/>
</dbReference>
<dbReference type="Bgee" id="ENSG00000196465">
    <property type="expression patterns" value="Expressed in gluteal muscle and 202 other cell types or tissues"/>
</dbReference>
<dbReference type="ExpressionAtlas" id="P14649">
    <property type="expression patterns" value="baseline and differential"/>
</dbReference>
<dbReference type="GO" id="GO:0005829">
    <property type="term" value="C:cytosol"/>
    <property type="evidence" value="ECO:0000304"/>
    <property type="project" value="Reactome"/>
</dbReference>
<dbReference type="GO" id="GO:0070062">
    <property type="term" value="C:extracellular exosome"/>
    <property type="evidence" value="ECO:0007005"/>
    <property type="project" value="UniProtKB"/>
</dbReference>
<dbReference type="GO" id="GO:0005859">
    <property type="term" value="C:muscle myosin complex"/>
    <property type="evidence" value="ECO:0000304"/>
    <property type="project" value="ProtInc"/>
</dbReference>
<dbReference type="GO" id="GO:0016459">
    <property type="term" value="C:myosin complex"/>
    <property type="evidence" value="ECO:0000304"/>
    <property type="project" value="HGNC-UCL"/>
</dbReference>
<dbReference type="GO" id="GO:0016460">
    <property type="term" value="C:myosin II complex"/>
    <property type="evidence" value="ECO:0000318"/>
    <property type="project" value="GO_Central"/>
</dbReference>
<dbReference type="GO" id="GO:0016461">
    <property type="term" value="C:unconventional myosin complex"/>
    <property type="evidence" value="ECO:0000304"/>
    <property type="project" value="BHF-UCL"/>
</dbReference>
<dbReference type="GO" id="GO:0005509">
    <property type="term" value="F:calcium ion binding"/>
    <property type="evidence" value="ECO:0007669"/>
    <property type="project" value="InterPro"/>
</dbReference>
<dbReference type="GO" id="GO:0003774">
    <property type="term" value="F:cytoskeletal motor activity"/>
    <property type="evidence" value="ECO:0000304"/>
    <property type="project" value="HGNC-UCL"/>
</dbReference>
<dbReference type="GO" id="GO:0008307">
    <property type="term" value="F:structural constituent of muscle"/>
    <property type="evidence" value="ECO:0000318"/>
    <property type="project" value="GO_Central"/>
</dbReference>
<dbReference type="GO" id="GO:0006936">
    <property type="term" value="P:muscle contraction"/>
    <property type="evidence" value="ECO:0000304"/>
    <property type="project" value="HGNC-UCL"/>
</dbReference>
<dbReference type="GO" id="GO:0030049">
    <property type="term" value="P:muscle filament sliding"/>
    <property type="evidence" value="ECO:0000304"/>
    <property type="project" value="HGNC-UCL"/>
</dbReference>
<dbReference type="GO" id="GO:0007519">
    <property type="term" value="P:skeletal muscle tissue development"/>
    <property type="evidence" value="ECO:0000304"/>
    <property type="project" value="HGNC-UCL"/>
</dbReference>
<dbReference type="CDD" id="cd00051">
    <property type="entry name" value="EFh"/>
    <property type="match status" value="1"/>
</dbReference>
<dbReference type="FunFam" id="1.10.238.10:FF:000019">
    <property type="entry name" value="Myosin light chain 1 skeletal"/>
    <property type="match status" value="1"/>
</dbReference>
<dbReference type="FunFam" id="1.10.238.10:FF:000056">
    <property type="entry name" value="Myosin light chain 1 skeletal"/>
    <property type="match status" value="1"/>
</dbReference>
<dbReference type="Gene3D" id="1.10.238.10">
    <property type="entry name" value="EF-hand"/>
    <property type="match status" value="2"/>
</dbReference>
<dbReference type="InterPro" id="IPR050230">
    <property type="entry name" value="CALM/Myosin/TropC-like"/>
</dbReference>
<dbReference type="InterPro" id="IPR011992">
    <property type="entry name" value="EF-hand-dom_pair"/>
</dbReference>
<dbReference type="InterPro" id="IPR002048">
    <property type="entry name" value="EF_hand_dom"/>
</dbReference>
<dbReference type="PANTHER" id="PTHR23048">
    <property type="entry name" value="MYOSIN LIGHT CHAIN 1, 3"/>
    <property type="match status" value="1"/>
</dbReference>
<dbReference type="PANTHER" id="PTHR23048:SF5">
    <property type="entry name" value="MYOSIN LIGHT CHAIN 6B"/>
    <property type="match status" value="1"/>
</dbReference>
<dbReference type="SMART" id="SM00054">
    <property type="entry name" value="EFh"/>
    <property type="match status" value="2"/>
</dbReference>
<dbReference type="SUPFAM" id="SSF47473">
    <property type="entry name" value="EF-hand"/>
    <property type="match status" value="1"/>
</dbReference>
<dbReference type="PROSITE" id="PS50222">
    <property type="entry name" value="EF_HAND_2"/>
    <property type="match status" value="3"/>
</dbReference>
<reference key="1">
    <citation type="journal article" date="1990" name="Mol. Cell. Biol.">
        <title>Characterization of human myosin light chains 1sa and 3nm: implications for isoform evolution and function.</title>
        <authorList>
            <person name="Hailstones D.L."/>
            <person name="Gunning P.W."/>
        </authorList>
    </citation>
    <scope>NUCLEOTIDE SEQUENCE [MRNA]</scope>
    <source>
        <tissue>Skeletal muscle</tissue>
    </source>
</reference>
<reference key="2">
    <citation type="journal article" date="1989" name="Nucleic Acids Res.">
        <title>A novel isoform of myosin alkali light chain isolated from human muscle cells.</title>
        <authorList>
            <person name="Zimmermann K."/>
            <person name="Starzinski-Powitz A."/>
        </authorList>
    </citation>
    <scope>NUCLEOTIDE SEQUENCE [MRNA]</scope>
    <source>
        <tissue>Skeletal muscle</tissue>
    </source>
</reference>
<reference key="3">
    <citation type="journal article" date="2004" name="Genome Res.">
        <title>The status, quality, and expansion of the NIH full-length cDNA project: the Mammalian Gene Collection (MGC).</title>
        <authorList>
            <consortium name="The MGC Project Team"/>
        </authorList>
    </citation>
    <scope>NUCLEOTIDE SEQUENCE [LARGE SCALE MRNA]</scope>
    <source>
        <tissue>Brain</tissue>
        <tissue>Ovary</tissue>
    </source>
</reference>
<reference key="4">
    <citation type="journal article" date="2011" name="BMC Syst. Biol.">
        <title>Initial characterization of the human central proteome.</title>
        <authorList>
            <person name="Burkard T.R."/>
            <person name="Planyavsky M."/>
            <person name="Kaupe I."/>
            <person name="Breitwieser F.P."/>
            <person name="Buerckstuemmer T."/>
            <person name="Bennett K.L."/>
            <person name="Superti-Furga G."/>
            <person name="Colinge J."/>
        </authorList>
    </citation>
    <scope>IDENTIFICATION BY MASS SPECTROMETRY [LARGE SCALE ANALYSIS]</scope>
</reference>
<evidence type="ECO:0000255" key="1">
    <source>
        <dbReference type="PROSITE-ProRule" id="PRU00448"/>
    </source>
</evidence>
<evidence type="ECO:0000256" key="2">
    <source>
        <dbReference type="SAM" id="MobiDB-lite"/>
    </source>
</evidence>
<evidence type="ECO:0007829" key="3">
    <source>
        <dbReference type="PDB" id="1OE9"/>
    </source>
</evidence>
<evidence type="ECO:0007829" key="4">
    <source>
        <dbReference type="PDB" id="1W7J"/>
    </source>
</evidence>
<proteinExistence type="evidence at protein level"/>